<protein>
    <recommendedName>
        <fullName evidence="1">1-(5-phosphoribosyl)-5-[(5-phosphoribosylamino)methylideneamino] imidazole-4-carboxamide isomerase</fullName>
        <ecNumber evidence="1">5.3.1.16</ecNumber>
    </recommendedName>
    <alternativeName>
        <fullName evidence="1">Phosphoribosylformimino-5-aminoimidazole carboxamide ribotide isomerase</fullName>
    </alternativeName>
</protein>
<comment type="catalytic activity">
    <reaction evidence="1">
        <text>1-(5-phospho-beta-D-ribosyl)-5-[(5-phospho-beta-D-ribosylamino)methylideneamino]imidazole-4-carboxamide = 5-[(5-phospho-1-deoxy-D-ribulos-1-ylimino)methylamino]-1-(5-phospho-beta-D-ribosyl)imidazole-4-carboxamide</text>
        <dbReference type="Rhea" id="RHEA:15469"/>
        <dbReference type="ChEBI" id="CHEBI:58435"/>
        <dbReference type="ChEBI" id="CHEBI:58525"/>
        <dbReference type="EC" id="5.3.1.16"/>
    </reaction>
</comment>
<comment type="pathway">
    <text evidence="1">Amino-acid biosynthesis; L-histidine biosynthesis; L-histidine from 5-phospho-alpha-D-ribose 1-diphosphate: step 4/9.</text>
</comment>
<comment type="subcellular location">
    <subcellularLocation>
        <location evidence="1">Cytoplasm</location>
    </subcellularLocation>
</comment>
<comment type="similarity">
    <text evidence="1">Belongs to the HisA/HisF family.</text>
</comment>
<organism>
    <name type="scientific">Polynucleobacter asymbioticus (strain DSM 18221 / CIP 109841 / QLW-P1DMWA-1)</name>
    <name type="common">Polynucleobacter necessarius subsp. asymbioticus</name>
    <dbReference type="NCBI Taxonomy" id="312153"/>
    <lineage>
        <taxon>Bacteria</taxon>
        <taxon>Pseudomonadati</taxon>
        <taxon>Pseudomonadota</taxon>
        <taxon>Betaproteobacteria</taxon>
        <taxon>Burkholderiales</taxon>
        <taxon>Burkholderiaceae</taxon>
        <taxon>Polynucleobacter</taxon>
    </lineage>
</organism>
<feature type="chain" id="PRO_1000084103" description="1-(5-phosphoribosyl)-5-[(5-phosphoribosylamino)methylideneamino] imidazole-4-carboxamide isomerase">
    <location>
        <begin position="1"/>
        <end position="253"/>
    </location>
</feature>
<feature type="active site" description="Proton acceptor" evidence="1">
    <location>
        <position position="8"/>
    </location>
</feature>
<feature type="active site" description="Proton donor" evidence="1">
    <location>
        <position position="131"/>
    </location>
</feature>
<reference key="1">
    <citation type="journal article" date="2012" name="Stand. Genomic Sci.">
        <title>Complete genome sequence of Polynucleobacter necessarius subsp. asymbioticus type strain (QLW-P1DMWA-1(T)).</title>
        <authorList>
            <person name="Meincke L."/>
            <person name="Copeland A."/>
            <person name="Lapidus A."/>
            <person name="Lucas S."/>
            <person name="Berry K.W."/>
            <person name="Del Rio T.G."/>
            <person name="Hammon N."/>
            <person name="Dalin E."/>
            <person name="Tice H."/>
            <person name="Pitluck S."/>
            <person name="Richardson P."/>
            <person name="Bruce D."/>
            <person name="Goodwin L."/>
            <person name="Han C."/>
            <person name="Tapia R."/>
            <person name="Detter J.C."/>
            <person name="Schmutz J."/>
            <person name="Brettin T."/>
            <person name="Larimer F."/>
            <person name="Land M."/>
            <person name="Hauser L."/>
            <person name="Kyrpides N.C."/>
            <person name="Ivanova N."/>
            <person name="Goker M."/>
            <person name="Woyke T."/>
            <person name="Wu Q.L."/>
            <person name="Pockl M."/>
            <person name="Hahn M.W."/>
            <person name="Klenk H.P."/>
        </authorList>
    </citation>
    <scope>NUCLEOTIDE SEQUENCE [LARGE SCALE GENOMIC DNA]</scope>
    <source>
        <strain>DSM 18221 / CIP 109841 / QLW-P1DMWA-1</strain>
    </source>
</reference>
<name>HIS4_POLAQ</name>
<accession>A4SV19</accession>
<gene>
    <name evidence="1" type="primary">hisA</name>
    <name type="ordered locus">Pnuc_0111</name>
</gene>
<evidence type="ECO:0000255" key="1">
    <source>
        <dbReference type="HAMAP-Rule" id="MF_01014"/>
    </source>
</evidence>
<proteinExistence type="inferred from homology"/>
<keyword id="KW-0028">Amino-acid biosynthesis</keyword>
<keyword id="KW-0963">Cytoplasm</keyword>
<keyword id="KW-0368">Histidine biosynthesis</keyword>
<keyword id="KW-0413">Isomerase</keyword>
<keyword id="KW-1185">Reference proteome</keyword>
<sequence>MLLIPAIDLKDGHCVRLEQGDMDKATVFSEDPGAMAAHWISKGARRLHLVDLNGAFAGKLKNESAIKSILKAVGNEIPVQLGGGIRDLETIERLLDDGISTVIIGTAAVKNPGFVQDACTAFPGHVMVGLDARDGKVATDGWSKITGHEVIDLAKKFEDWGVEAIIYTDIGRDGMLKGVNIEATMKLAQAIRIPVIASGGLSNNQDIEALCKAEEEGVMGVIAGRSIYAADLDLAAAQKYADELTLKYAKKII</sequence>
<dbReference type="EC" id="5.3.1.16" evidence="1"/>
<dbReference type="EMBL" id="CP000655">
    <property type="protein sequence ID" value="ABP33333.1"/>
    <property type="molecule type" value="Genomic_DNA"/>
</dbReference>
<dbReference type="RefSeq" id="WP_011901958.1">
    <property type="nucleotide sequence ID" value="NC_009379.1"/>
</dbReference>
<dbReference type="SMR" id="A4SV19"/>
<dbReference type="GeneID" id="31480458"/>
<dbReference type="KEGG" id="pnu:Pnuc_0111"/>
<dbReference type="eggNOG" id="COG0106">
    <property type="taxonomic scope" value="Bacteria"/>
</dbReference>
<dbReference type="HOGENOM" id="CLU_048577_1_1_4"/>
<dbReference type="UniPathway" id="UPA00031">
    <property type="reaction ID" value="UER00009"/>
</dbReference>
<dbReference type="Proteomes" id="UP000000231">
    <property type="component" value="Chromosome"/>
</dbReference>
<dbReference type="GO" id="GO:0005737">
    <property type="term" value="C:cytoplasm"/>
    <property type="evidence" value="ECO:0007669"/>
    <property type="project" value="UniProtKB-SubCell"/>
</dbReference>
<dbReference type="GO" id="GO:0003949">
    <property type="term" value="F:1-(5-phosphoribosyl)-5-[(5-phosphoribosylamino)methylideneamino]imidazole-4-carboxamide isomerase activity"/>
    <property type="evidence" value="ECO:0007669"/>
    <property type="project" value="UniProtKB-UniRule"/>
</dbReference>
<dbReference type="GO" id="GO:0000105">
    <property type="term" value="P:L-histidine biosynthetic process"/>
    <property type="evidence" value="ECO:0007669"/>
    <property type="project" value="UniProtKB-UniRule"/>
</dbReference>
<dbReference type="GO" id="GO:0000162">
    <property type="term" value="P:L-tryptophan biosynthetic process"/>
    <property type="evidence" value="ECO:0007669"/>
    <property type="project" value="TreeGrafter"/>
</dbReference>
<dbReference type="CDD" id="cd04732">
    <property type="entry name" value="HisA"/>
    <property type="match status" value="1"/>
</dbReference>
<dbReference type="FunFam" id="3.20.20.70:FF:000009">
    <property type="entry name" value="1-(5-phosphoribosyl)-5-[(5-phosphoribosylamino)methylideneamino] imidazole-4-carboxamide isomerase"/>
    <property type="match status" value="1"/>
</dbReference>
<dbReference type="Gene3D" id="3.20.20.70">
    <property type="entry name" value="Aldolase class I"/>
    <property type="match status" value="1"/>
</dbReference>
<dbReference type="HAMAP" id="MF_01014">
    <property type="entry name" value="HisA"/>
    <property type="match status" value="1"/>
</dbReference>
<dbReference type="InterPro" id="IPR013785">
    <property type="entry name" value="Aldolase_TIM"/>
</dbReference>
<dbReference type="InterPro" id="IPR006062">
    <property type="entry name" value="His_biosynth"/>
</dbReference>
<dbReference type="InterPro" id="IPR006063">
    <property type="entry name" value="HisA_bact_arch"/>
</dbReference>
<dbReference type="InterPro" id="IPR044524">
    <property type="entry name" value="Isoase_HisA-like"/>
</dbReference>
<dbReference type="InterPro" id="IPR023016">
    <property type="entry name" value="Isoase_HisA-like_bact"/>
</dbReference>
<dbReference type="InterPro" id="IPR011060">
    <property type="entry name" value="RibuloseP-bd_barrel"/>
</dbReference>
<dbReference type="NCBIfam" id="TIGR00007">
    <property type="entry name" value="1-(5-phosphoribosyl)-5-[(5-phosphoribosylamino)methylideneamino]imidazole-4-carboxamide isomerase"/>
    <property type="match status" value="1"/>
</dbReference>
<dbReference type="NCBIfam" id="NF010112">
    <property type="entry name" value="PRK13585.1"/>
    <property type="match status" value="1"/>
</dbReference>
<dbReference type="PANTHER" id="PTHR43090">
    <property type="entry name" value="1-(5-PHOSPHORIBOSYL)-5-[(5-PHOSPHORIBOSYLAMINO)METHYLIDENEAMINO] IMIDAZOLE-4-CARBOXAMIDE ISOMERASE"/>
    <property type="match status" value="1"/>
</dbReference>
<dbReference type="PANTHER" id="PTHR43090:SF2">
    <property type="entry name" value="1-(5-PHOSPHORIBOSYL)-5-[(5-PHOSPHORIBOSYLAMINO)METHYLIDENEAMINO] IMIDAZOLE-4-CARBOXAMIDE ISOMERASE"/>
    <property type="match status" value="1"/>
</dbReference>
<dbReference type="Pfam" id="PF00977">
    <property type="entry name" value="His_biosynth"/>
    <property type="match status" value="1"/>
</dbReference>
<dbReference type="SUPFAM" id="SSF51366">
    <property type="entry name" value="Ribulose-phoshate binding barrel"/>
    <property type="match status" value="1"/>
</dbReference>